<dbReference type="EC" id="7.1.1.2"/>
<dbReference type="EMBL" id="AJ304826">
    <property type="protein sequence ID" value="CAC83113.1"/>
    <property type="molecule type" value="Genomic_DNA"/>
</dbReference>
<dbReference type="RefSeq" id="NP_542251.1">
    <property type="nucleotide sequence ID" value="NC_003322.1"/>
</dbReference>
<dbReference type="SMR" id="Q8W9B6"/>
<dbReference type="STRING" id="29139.ENSVURP00010032886"/>
<dbReference type="Ensembl" id="ENSVURT00010037444.1">
    <property type="protein sequence ID" value="ENSVURP00010032886.1"/>
    <property type="gene ID" value="ENSVURG00010025087.1"/>
</dbReference>
<dbReference type="GeneID" id="804525"/>
<dbReference type="CTD" id="4539"/>
<dbReference type="GeneTree" id="ENSGT00390000004755"/>
<dbReference type="OMA" id="MYRSHLM"/>
<dbReference type="OrthoDB" id="6146597at2759"/>
<dbReference type="Proteomes" id="UP000314987">
    <property type="component" value="Unassembled WGS sequence"/>
</dbReference>
<dbReference type="GO" id="GO:0005743">
    <property type="term" value="C:mitochondrial inner membrane"/>
    <property type="evidence" value="ECO:0000250"/>
    <property type="project" value="UniProtKB"/>
</dbReference>
<dbReference type="GO" id="GO:0045271">
    <property type="term" value="C:respiratory chain complex I"/>
    <property type="evidence" value="ECO:0000250"/>
    <property type="project" value="UniProtKB"/>
</dbReference>
<dbReference type="GO" id="GO:0008137">
    <property type="term" value="F:NADH dehydrogenase (ubiquinone) activity"/>
    <property type="evidence" value="ECO:0000250"/>
    <property type="project" value="UniProtKB"/>
</dbReference>
<dbReference type="GO" id="GO:0042773">
    <property type="term" value="P:ATP synthesis coupled electron transport"/>
    <property type="evidence" value="ECO:0007669"/>
    <property type="project" value="InterPro"/>
</dbReference>
<dbReference type="FunFam" id="1.10.287.3510:FF:000002">
    <property type="entry name" value="NADH-ubiquinone oxidoreductase chain 4L"/>
    <property type="match status" value="1"/>
</dbReference>
<dbReference type="Gene3D" id="1.10.287.3510">
    <property type="match status" value="1"/>
</dbReference>
<dbReference type="InterPro" id="IPR001133">
    <property type="entry name" value="NADH_UbQ_OxRdtase_chain4L/K"/>
</dbReference>
<dbReference type="InterPro" id="IPR039428">
    <property type="entry name" value="NUOK/Mnh_C1-like"/>
</dbReference>
<dbReference type="PANTHER" id="PTHR11434:SF0">
    <property type="entry name" value="NADH-UBIQUINONE OXIDOREDUCTASE CHAIN 4L"/>
    <property type="match status" value="1"/>
</dbReference>
<dbReference type="PANTHER" id="PTHR11434">
    <property type="entry name" value="NADH-UBIQUINONE OXIDOREDUCTASE SUBUNIT ND4L"/>
    <property type="match status" value="1"/>
</dbReference>
<dbReference type="Pfam" id="PF00420">
    <property type="entry name" value="Oxidored_q2"/>
    <property type="match status" value="1"/>
</dbReference>
<sequence length="98" mass="10655">MTSISLNLIMAFSLALAGVLIYRSHLMSTLLCLEGMMLSLFILMALLISHFHMLSVSMAPLILLVFSACEAGVGLALLVKTSTDYGNDYVQNLNLLQC</sequence>
<name>NU4LM_VOMUR</name>
<proteinExistence type="inferred from homology"/>
<comment type="function">
    <text evidence="1">Core subunit of the mitochondrial membrane respiratory chain NADH dehydrogenase (Complex I) which catalyzes electron transfer from NADH through the respiratory chain, using ubiquinone as an electron acceptor. Part of the enzyme membrane arm which is embedded in the lipid bilayer and involved in proton translocation.</text>
</comment>
<comment type="catalytic activity">
    <reaction evidence="1">
        <text>a ubiquinone + NADH + 5 H(+)(in) = a ubiquinol + NAD(+) + 4 H(+)(out)</text>
        <dbReference type="Rhea" id="RHEA:29091"/>
        <dbReference type="Rhea" id="RHEA-COMP:9565"/>
        <dbReference type="Rhea" id="RHEA-COMP:9566"/>
        <dbReference type="ChEBI" id="CHEBI:15378"/>
        <dbReference type="ChEBI" id="CHEBI:16389"/>
        <dbReference type="ChEBI" id="CHEBI:17976"/>
        <dbReference type="ChEBI" id="CHEBI:57540"/>
        <dbReference type="ChEBI" id="CHEBI:57945"/>
        <dbReference type="EC" id="7.1.1.2"/>
    </reaction>
    <physiologicalReaction direction="left-to-right" evidence="1">
        <dbReference type="Rhea" id="RHEA:29092"/>
    </physiologicalReaction>
</comment>
<comment type="subunit">
    <text evidence="2">Core subunit of respiratory chain NADH dehydrogenase (Complex I) which is composed of 45 different subunits.</text>
</comment>
<comment type="subcellular location">
    <subcellularLocation>
        <location evidence="2">Mitochondrion inner membrane</location>
        <topology evidence="3">Multi-pass membrane protein</topology>
    </subcellularLocation>
</comment>
<comment type="similarity">
    <text evidence="4">Belongs to the complex I subunit 4L family.</text>
</comment>
<keyword id="KW-0249">Electron transport</keyword>
<keyword id="KW-0472">Membrane</keyword>
<keyword id="KW-0496">Mitochondrion</keyword>
<keyword id="KW-0999">Mitochondrion inner membrane</keyword>
<keyword id="KW-0520">NAD</keyword>
<keyword id="KW-1185">Reference proteome</keyword>
<keyword id="KW-0679">Respiratory chain</keyword>
<keyword id="KW-1278">Translocase</keyword>
<keyword id="KW-0812">Transmembrane</keyword>
<keyword id="KW-1133">Transmembrane helix</keyword>
<keyword id="KW-0813">Transport</keyword>
<keyword id="KW-0830">Ubiquinone</keyword>
<reference key="1">
    <citation type="journal article" date="2002" name="J. Mol. Evol.">
        <title>Phylogenetic analysis of 18S rRNA and the mitochondrial genomes of the wombat, Vombatus ursinus, and the spiny anteater, Tachyglossus aculeatus: increased support for the Marsupionta hypothesis.</title>
        <authorList>
            <person name="Janke A."/>
            <person name="Magnell O."/>
            <person name="Wieczorek G."/>
            <person name="Westerman M."/>
            <person name="Arnason U."/>
        </authorList>
    </citation>
    <scope>NUCLEOTIDE SEQUENCE [GENOMIC DNA]</scope>
</reference>
<evidence type="ECO:0000250" key="1">
    <source>
        <dbReference type="UniProtKB" id="P03901"/>
    </source>
</evidence>
<evidence type="ECO:0000250" key="2">
    <source>
        <dbReference type="UniProtKB" id="P03902"/>
    </source>
</evidence>
<evidence type="ECO:0000255" key="3"/>
<evidence type="ECO:0000305" key="4"/>
<protein>
    <recommendedName>
        <fullName>NADH-ubiquinone oxidoreductase chain 4L</fullName>
        <ecNumber>7.1.1.2</ecNumber>
    </recommendedName>
    <alternativeName>
        <fullName>NADH dehydrogenase subunit 4L</fullName>
    </alternativeName>
</protein>
<gene>
    <name type="primary">MT-ND4L</name>
    <name type="synonym">MTND4L</name>
    <name type="synonym">NADH4L</name>
    <name type="synonym">ND4L</name>
</gene>
<organism>
    <name type="scientific">Vombatus ursinus</name>
    <name type="common">Common wombat</name>
    <dbReference type="NCBI Taxonomy" id="29139"/>
    <lineage>
        <taxon>Eukaryota</taxon>
        <taxon>Metazoa</taxon>
        <taxon>Chordata</taxon>
        <taxon>Craniata</taxon>
        <taxon>Vertebrata</taxon>
        <taxon>Euteleostomi</taxon>
        <taxon>Mammalia</taxon>
        <taxon>Metatheria</taxon>
        <taxon>Diprotodontia</taxon>
        <taxon>Vombatidae</taxon>
        <taxon>Vombatus</taxon>
    </lineage>
</organism>
<feature type="chain" id="PRO_0000275149" description="NADH-ubiquinone oxidoreductase chain 4L">
    <location>
        <begin position="1"/>
        <end position="98"/>
    </location>
</feature>
<feature type="transmembrane region" description="Helical" evidence="3">
    <location>
        <begin position="1"/>
        <end position="21"/>
    </location>
</feature>
<feature type="transmembrane region" description="Helical" evidence="3">
    <location>
        <begin position="28"/>
        <end position="48"/>
    </location>
</feature>
<feature type="transmembrane region" description="Helical" evidence="3">
    <location>
        <begin position="59"/>
        <end position="79"/>
    </location>
</feature>
<accession>Q8W9B6</accession>
<geneLocation type="mitochondrion"/>